<evidence type="ECO:0000255" key="1">
    <source>
        <dbReference type="HAMAP-Rule" id="MF_01043"/>
    </source>
</evidence>
<protein>
    <recommendedName>
        <fullName evidence="1">Glycerol-3-phosphate acyltransferase</fullName>
    </recommendedName>
    <alternativeName>
        <fullName evidence="1">Acyl-PO4 G3P acyltransferase</fullName>
    </alternativeName>
    <alternativeName>
        <fullName evidence="1">Acyl-phosphate--glycerol-3-phosphate acyltransferase</fullName>
    </alternativeName>
    <alternativeName>
        <fullName evidence="1">G3P acyltransferase</fullName>
        <shortName evidence="1">GPAT</shortName>
        <ecNumber evidence="1">2.3.1.275</ecNumber>
    </alternativeName>
    <alternativeName>
        <fullName evidence="1">Lysophosphatidic acid synthase</fullName>
        <shortName evidence="1">LPA synthase</shortName>
    </alternativeName>
</protein>
<keyword id="KW-1003">Cell membrane</keyword>
<keyword id="KW-0444">Lipid biosynthesis</keyword>
<keyword id="KW-0443">Lipid metabolism</keyword>
<keyword id="KW-0472">Membrane</keyword>
<keyword id="KW-0594">Phospholipid biosynthesis</keyword>
<keyword id="KW-1208">Phospholipid metabolism</keyword>
<keyword id="KW-0808">Transferase</keyword>
<keyword id="KW-0812">Transmembrane</keyword>
<keyword id="KW-1133">Transmembrane helix</keyword>
<feature type="chain" id="PRO_1000213416" description="Glycerol-3-phosphate acyltransferase">
    <location>
        <begin position="1"/>
        <end position="215"/>
    </location>
</feature>
<feature type="transmembrane region" description="Helical" evidence="1">
    <location>
        <begin position="3"/>
        <end position="23"/>
    </location>
</feature>
<feature type="transmembrane region" description="Helical" evidence="1">
    <location>
        <begin position="42"/>
        <end position="61"/>
    </location>
</feature>
<feature type="transmembrane region" description="Helical" evidence="1">
    <location>
        <begin position="68"/>
        <end position="90"/>
    </location>
</feature>
<feature type="transmembrane region" description="Helical" evidence="1">
    <location>
        <begin position="110"/>
        <end position="130"/>
    </location>
</feature>
<feature type="transmembrane region" description="Helical" evidence="1">
    <location>
        <begin position="134"/>
        <end position="154"/>
    </location>
</feature>
<feature type="transmembrane region" description="Helical" evidence="1">
    <location>
        <begin position="162"/>
        <end position="182"/>
    </location>
</feature>
<comment type="function">
    <text evidence="1">Catalyzes the transfer of an acyl group from acyl-phosphate (acyl-PO(4)) to glycerol-3-phosphate (G3P) to form lysophosphatidic acid (LPA). This enzyme utilizes acyl-phosphate as fatty acyl donor, but not acyl-CoA or acyl-ACP.</text>
</comment>
<comment type="catalytic activity">
    <reaction evidence="1">
        <text>an acyl phosphate + sn-glycerol 3-phosphate = a 1-acyl-sn-glycero-3-phosphate + phosphate</text>
        <dbReference type="Rhea" id="RHEA:34075"/>
        <dbReference type="ChEBI" id="CHEBI:43474"/>
        <dbReference type="ChEBI" id="CHEBI:57597"/>
        <dbReference type="ChEBI" id="CHEBI:57970"/>
        <dbReference type="ChEBI" id="CHEBI:59918"/>
        <dbReference type="EC" id="2.3.1.275"/>
    </reaction>
</comment>
<comment type="pathway">
    <text evidence="1">Lipid metabolism; phospholipid metabolism.</text>
</comment>
<comment type="subunit">
    <text evidence="1">Probably interacts with PlsX.</text>
</comment>
<comment type="subcellular location">
    <subcellularLocation>
        <location evidence="1">Cell membrane</location>
        <topology evidence="1">Multi-pass membrane protein</topology>
    </subcellularLocation>
</comment>
<comment type="similarity">
    <text evidence="1">Belongs to the PlsY family.</text>
</comment>
<name>PLSY_STRS7</name>
<sequence>MKLILLILTAYLLGSIPTGLWIGQYFYNINLREHGSGNTGTTNTFRILGLKAGAATLLIDIFKGTLATLLPVLVGASNVSPIAIGFFAVLGHTFPIFAGFKGGKAVATSAGVLLGFAPLYLLFLAAVFVLTLYLFSMISLASLTASVVAVISVLTFPAAHFLLPGYDWLLTITIVVLAAIIILRHQDNMKRIKQQSENLIPWGLNLSKQQPTNHH</sequence>
<dbReference type="EC" id="2.3.1.275" evidence="1"/>
<dbReference type="EMBL" id="FM204884">
    <property type="protein sequence ID" value="CAW98998.1"/>
    <property type="molecule type" value="Genomic_DNA"/>
</dbReference>
<dbReference type="SMR" id="C0ME59"/>
<dbReference type="KEGG" id="seq:SZO_08220"/>
<dbReference type="eggNOG" id="COG0344">
    <property type="taxonomic scope" value="Bacteria"/>
</dbReference>
<dbReference type="HOGENOM" id="CLU_081254_4_0_9"/>
<dbReference type="UniPathway" id="UPA00085"/>
<dbReference type="Proteomes" id="UP000001368">
    <property type="component" value="Chromosome"/>
</dbReference>
<dbReference type="GO" id="GO:0005886">
    <property type="term" value="C:plasma membrane"/>
    <property type="evidence" value="ECO:0007669"/>
    <property type="project" value="UniProtKB-SubCell"/>
</dbReference>
<dbReference type="GO" id="GO:0043772">
    <property type="term" value="F:acyl-phosphate glycerol-3-phosphate acyltransferase activity"/>
    <property type="evidence" value="ECO:0007669"/>
    <property type="project" value="UniProtKB-UniRule"/>
</dbReference>
<dbReference type="GO" id="GO:0008654">
    <property type="term" value="P:phospholipid biosynthetic process"/>
    <property type="evidence" value="ECO:0007669"/>
    <property type="project" value="UniProtKB-UniRule"/>
</dbReference>
<dbReference type="HAMAP" id="MF_01043">
    <property type="entry name" value="PlsY"/>
    <property type="match status" value="1"/>
</dbReference>
<dbReference type="InterPro" id="IPR003811">
    <property type="entry name" value="G3P_acylTferase_PlsY"/>
</dbReference>
<dbReference type="NCBIfam" id="TIGR00023">
    <property type="entry name" value="glycerol-3-phosphate 1-O-acyltransferase PlsY"/>
    <property type="match status" value="1"/>
</dbReference>
<dbReference type="PANTHER" id="PTHR30309:SF0">
    <property type="entry name" value="GLYCEROL-3-PHOSPHATE ACYLTRANSFERASE-RELATED"/>
    <property type="match status" value="1"/>
</dbReference>
<dbReference type="PANTHER" id="PTHR30309">
    <property type="entry name" value="INNER MEMBRANE PROTEIN YGIH"/>
    <property type="match status" value="1"/>
</dbReference>
<dbReference type="Pfam" id="PF02660">
    <property type="entry name" value="G3P_acyltransf"/>
    <property type="match status" value="1"/>
</dbReference>
<dbReference type="SMART" id="SM01207">
    <property type="entry name" value="G3P_acyltransf"/>
    <property type="match status" value="1"/>
</dbReference>
<reference key="1">
    <citation type="journal article" date="2009" name="PLoS Pathog.">
        <title>Genomic evidence for the evolution of Streptococcus equi: host restriction, increased virulence, and genetic exchange with human pathogens.</title>
        <authorList>
            <person name="Holden M.T.G."/>
            <person name="Heather Z."/>
            <person name="Paillot R."/>
            <person name="Steward K.F."/>
            <person name="Webb K."/>
            <person name="Ainslie F."/>
            <person name="Jourdan T."/>
            <person name="Bason N.C."/>
            <person name="Holroyd N.E."/>
            <person name="Mungall K."/>
            <person name="Quail M.A."/>
            <person name="Sanders M."/>
            <person name="Simmonds M."/>
            <person name="Willey D."/>
            <person name="Brooks K."/>
            <person name="Aanensen D.M."/>
            <person name="Spratt B.G."/>
            <person name="Jolley K.A."/>
            <person name="Maiden M.C.J."/>
            <person name="Kehoe M."/>
            <person name="Chanter N."/>
            <person name="Bentley S.D."/>
            <person name="Robinson C."/>
            <person name="Maskell D.J."/>
            <person name="Parkhill J."/>
            <person name="Waller A.S."/>
        </authorList>
    </citation>
    <scope>NUCLEOTIDE SEQUENCE [LARGE SCALE GENOMIC DNA]</scope>
    <source>
        <strain>H70</strain>
    </source>
</reference>
<proteinExistence type="inferred from homology"/>
<gene>
    <name evidence="1" type="primary">plsY</name>
    <name type="ordered locus">SZO_08220</name>
</gene>
<accession>C0ME59</accession>
<organism>
    <name type="scientific">Streptococcus equi subsp. zooepidemicus (strain H70)</name>
    <dbReference type="NCBI Taxonomy" id="553483"/>
    <lineage>
        <taxon>Bacteria</taxon>
        <taxon>Bacillati</taxon>
        <taxon>Bacillota</taxon>
        <taxon>Bacilli</taxon>
        <taxon>Lactobacillales</taxon>
        <taxon>Streptococcaceae</taxon>
        <taxon>Streptococcus</taxon>
    </lineage>
</organism>